<comment type="function">
    <text evidence="1">Responsible for the release of ribosomes from messenger RNA at the termination of protein biosynthesis. May increase the efficiency of translation by recycling ribosomes from one round of translation to another.</text>
</comment>
<comment type="subcellular location">
    <subcellularLocation>
        <location evidence="1">Cytoplasm</location>
    </subcellularLocation>
</comment>
<comment type="similarity">
    <text evidence="1">Belongs to the RRF family.</text>
</comment>
<protein>
    <recommendedName>
        <fullName evidence="1">Ribosome-recycling factor</fullName>
        <shortName evidence="1">RRF</shortName>
    </recommendedName>
    <alternativeName>
        <fullName evidence="1">Ribosome-releasing factor</fullName>
    </alternativeName>
</protein>
<keyword id="KW-0963">Cytoplasm</keyword>
<keyword id="KW-0648">Protein biosynthesis</keyword>
<keyword id="KW-1185">Reference proteome</keyword>
<feature type="chain" id="PRO_0000167561" description="Ribosome-recycling factor">
    <location>
        <begin position="1"/>
        <end position="182"/>
    </location>
</feature>
<evidence type="ECO:0000255" key="1">
    <source>
        <dbReference type="HAMAP-Rule" id="MF_00040"/>
    </source>
</evidence>
<gene>
    <name evidence="1" type="primary">frr</name>
    <name type="synonym">rrf</name>
    <name type="ordered locus">tll0259</name>
</gene>
<proteinExistence type="inferred from homology"/>
<dbReference type="EMBL" id="BA000039">
    <property type="protein sequence ID" value="BAC07812.1"/>
    <property type="molecule type" value="Genomic_DNA"/>
</dbReference>
<dbReference type="RefSeq" id="NP_681050.1">
    <property type="nucleotide sequence ID" value="NC_004113.1"/>
</dbReference>
<dbReference type="RefSeq" id="WP_011056114.1">
    <property type="nucleotide sequence ID" value="NC_004113.1"/>
</dbReference>
<dbReference type="SMR" id="Q8DM64"/>
<dbReference type="STRING" id="197221.gene:10746841"/>
<dbReference type="EnsemblBacteria" id="BAC07812">
    <property type="protein sequence ID" value="BAC07812"/>
    <property type="gene ID" value="BAC07812"/>
</dbReference>
<dbReference type="KEGG" id="tel:tll0259"/>
<dbReference type="PATRIC" id="fig|197221.4.peg.272"/>
<dbReference type="eggNOG" id="COG0233">
    <property type="taxonomic scope" value="Bacteria"/>
</dbReference>
<dbReference type="Proteomes" id="UP000000440">
    <property type="component" value="Chromosome"/>
</dbReference>
<dbReference type="GO" id="GO:0005737">
    <property type="term" value="C:cytoplasm"/>
    <property type="evidence" value="ECO:0007669"/>
    <property type="project" value="UniProtKB-SubCell"/>
</dbReference>
<dbReference type="GO" id="GO:0043023">
    <property type="term" value="F:ribosomal large subunit binding"/>
    <property type="evidence" value="ECO:0007669"/>
    <property type="project" value="TreeGrafter"/>
</dbReference>
<dbReference type="GO" id="GO:0006415">
    <property type="term" value="P:translational termination"/>
    <property type="evidence" value="ECO:0007669"/>
    <property type="project" value="UniProtKB-UniRule"/>
</dbReference>
<dbReference type="CDD" id="cd00520">
    <property type="entry name" value="RRF"/>
    <property type="match status" value="1"/>
</dbReference>
<dbReference type="FunFam" id="1.10.132.20:FF:000001">
    <property type="entry name" value="Ribosome-recycling factor"/>
    <property type="match status" value="1"/>
</dbReference>
<dbReference type="FunFam" id="3.30.1360.40:FF:000001">
    <property type="entry name" value="Ribosome-recycling factor"/>
    <property type="match status" value="1"/>
</dbReference>
<dbReference type="Gene3D" id="3.30.1360.40">
    <property type="match status" value="1"/>
</dbReference>
<dbReference type="Gene3D" id="1.10.132.20">
    <property type="entry name" value="Ribosome-recycling factor"/>
    <property type="match status" value="1"/>
</dbReference>
<dbReference type="HAMAP" id="MF_00040">
    <property type="entry name" value="RRF"/>
    <property type="match status" value="1"/>
</dbReference>
<dbReference type="InterPro" id="IPR002661">
    <property type="entry name" value="Ribosome_recyc_fac"/>
</dbReference>
<dbReference type="InterPro" id="IPR023584">
    <property type="entry name" value="Ribosome_recyc_fac_dom"/>
</dbReference>
<dbReference type="InterPro" id="IPR036191">
    <property type="entry name" value="RRF_sf"/>
</dbReference>
<dbReference type="NCBIfam" id="TIGR00496">
    <property type="entry name" value="frr"/>
    <property type="match status" value="1"/>
</dbReference>
<dbReference type="PANTHER" id="PTHR20982:SF3">
    <property type="entry name" value="MITOCHONDRIAL RIBOSOME RECYCLING FACTOR PSEUDO 1"/>
    <property type="match status" value="1"/>
</dbReference>
<dbReference type="PANTHER" id="PTHR20982">
    <property type="entry name" value="RIBOSOME RECYCLING FACTOR"/>
    <property type="match status" value="1"/>
</dbReference>
<dbReference type="Pfam" id="PF01765">
    <property type="entry name" value="RRF"/>
    <property type="match status" value="1"/>
</dbReference>
<dbReference type="SUPFAM" id="SSF55194">
    <property type="entry name" value="Ribosome recycling factor, RRF"/>
    <property type="match status" value="1"/>
</dbReference>
<name>RRF_THEVB</name>
<organism>
    <name type="scientific">Thermosynechococcus vestitus (strain NIES-2133 / IAM M-273 / BP-1)</name>
    <dbReference type="NCBI Taxonomy" id="197221"/>
    <lineage>
        <taxon>Bacteria</taxon>
        <taxon>Bacillati</taxon>
        <taxon>Cyanobacteriota</taxon>
        <taxon>Cyanophyceae</taxon>
        <taxon>Acaryochloridales</taxon>
        <taxon>Thermosynechococcaceae</taxon>
        <taxon>Thermosynechococcus</taxon>
    </lineage>
</organism>
<sequence>MKLADVEERMQKSVEATQHDFNSIRTGRANAALLDRVMVDYYGTETPLRSLANVSTPDATTILIQPYDRSTLASIEKAIQLSDLGLTPNNDGSSVRLNIPPLTTERRKELVKTAAKIAEGGKVAIRNIRRDAIDHIKKAGKAGELTEDEVKDLQEKVQKLTDKYIGKIDALLAEKEKDIMTV</sequence>
<reference key="1">
    <citation type="journal article" date="2002" name="DNA Res.">
        <title>Complete genome structure of the thermophilic cyanobacterium Thermosynechococcus elongatus BP-1.</title>
        <authorList>
            <person name="Nakamura Y."/>
            <person name="Kaneko T."/>
            <person name="Sato S."/>
            <person name="Ikeuchi M."/>
            <person name="Katoh H."/>
            <person name="Sasamoto S."/>
            <person name="Watanabe A."/>
            <person name="Iriguchi M."/>
            <person name="Kawashima K."/>
            <person name="Kimura T."/>
            <person name="Kishida Y."/>
            <person name="Kiyokawa C."/>
            <person name="Kohara M."/>
            <person name="Matsumoto M."/>
            <person name="Matsuno A."/>
            <person name="Nakazaki N."/>
            <person name="Shimpo S."/>
            <person name="Sugimoto M."/>
            <person name="Takeuchi C."/>
            <person name="Yamada M."/>
            <person name="Tabata S."/>
        </authorList>
    </citation>
    <scope>NUCLEOTIDE SEQUENCE [LARGE SCALE GENOMIC DNA]</scope>
    <source>
        <strain>NIES-2133 / IAM M-273 / BP-1</strain>
    </source>
</reference>
<accession>Q8DM64</accession>